<feature type="chain" id="PRO_0000101052" description="Threonine--tRNA ligase">
    <location>
        <begin position="1"/>
        <end position="645"/>
    </location>
</feature>
<feature type="domain" description="TGS" evidence="2">
    <location>
        <begin position="1"/>
        <end position="63"/>
    </location>
</feature>
<feature type="region of interest" description="N1 domain" evidence="4">
    <location>
        <begin position="1"/>
        <end position="62"/>
    </location>
</feature>
<feature type="region of interest" description="N2 domain" evidence="4">
    <location>
        <begin position="63"/>
        <end position="223"/>
    </location>
</feature>
<feature type="region of interest" description="Catalytic" evidence="4">
    <location>
        <begin position="242"/>
        <end position="540"/>
    </location>
</feature>
<feature type="region of interest" description="Anticodon recognition" evidence="4">
    <location>
        <begin position="541"/>
        <end position="645"/>
    </location>
</feature>
<feature type="binding site" evidence="1 3">
    <location>
        <position position="336"/>
    </location>
    <ligand>
        <name>Zn(2+)</name>
        <dbReference type="ChEBI" id="CHEBI:29105"/>
    </ligand>
</feature>
<feature type="binding site" evidence="3">
    <location>
        <position position="365"/>
    </location>
    <ligand>
        <name>ATP</name>
        <dbReference type="ChEBI" id="CHEBI:30616"/>
    </ligand>
</feature>
<feature type="binding site" evidence="3">
    <location>
        <position position="365"/>
    </location>
    <ligand>
        <name>L-threonine</name>
        <dbReference type="ChEBI" id="CHEBI:57926"/>
    </ligand>
</feature>
<feature type="binding site" evidence="3">
    <location>
        <begin position="377"/>
        <end position="378"/>
    </location>
    <ligand>
        <name>ATP</name>
        <dbReference type="ChEBI" id="CHEBI:30616"/>
    </ligand>
</feature>
<feature type="binding site" evidence="1 3">
    <location>
        <position position="387"/>
    </location>
    <ligand>
        <name>Zn(2+)</name>
        <dbReference type="ChEBI" id="CHEBI:29105"/>
    </ligand>
</feature>
<feature type="binding site" evidence="3">
    <location>
        <position position="468"/>
    </location>
    <ligand>
        <name>L-threonine</name>
        <dbReference type="ChEBI" id="CHEBI:57926"/>
    </ligand>
</feature>
<feature type="binding site" evidence="3">
    <location>
        <position position="471"/>
    </location>
    <ligand>
        <name>ATP</name>
        <dbReference type="ChEBI" id="CHEBI:30616"/>
    </ligand>
</feature>
<feature type="binding site" evidence="3">
    <location>
        <begin position="485"/>
        <end position="486"/>
    </location>
    <ligand>
        <name>ATP</name>
        <dbReference type="ChEBI" id="CHEBI:30616"/>
    </ligand>
</feature>
<feature type="binding site" evidence="1 3">
    <location>
        <position position="517"/>
    </location>
    <ligand>
        <name>Zn(2+)</name>
        <dbReference type="ChEBI" id="CHEBI:29105"/>
    </ligand>
</feature>
<feature type="binding site" evidence="3">
    <location>
        <position position="522"/>
    </location>
    <ligand>
        <name>ATP</name>
        <dbReference type="ChEBI" id="CHEBI:30616"/>
    </ligand>
</feature>
<feature type="strand" evidence="7">
    <location>
        <begin position="9"/>
        <end position="11"/>
    </location>
</feature>
<feature type="strand" evidence="7">
    <location>
        <begin position="18"/>
        <end position="20"/>
    </location>
</feature>
<feature type="helix" evidence="8">
    <location>
        <begin position="22"/>
        <end position="27"/>
    </location>
</feature>
<feature type="helix" evidence="8">
    <location>
        <begin position="31"/>
        <end position="36"/>
    </location>
</feature>
<feature type="strand" evidence="8">
    <location>
        <begin position="39"/>
        <end position="42"/>
    </location>
</feature>
<feature type="strand" evidence="8">
    <location>
        <begin position="45"/>
        <end position="47"/>
    </location>
</feature>
<feature type="strand" evidence="7">
    <location>
        <begin position="58"/>
        <end position="62"/>
    </location>
</feature>
<feature type="helix" evidence="8">
    <location>
        <begin position="67"/>
        <end position="88"/>
    </location>
</feature>
<feature type="strand" evidence="8">
    <location>
        <begin position="89"/>
        <end position="91"/>
    </location>
</feature>
<feature type="strand" evidence="8">
    <location>
        <begin position="103"/>
        <end position="109"/>
    </location>
</feature>
<feature type="turn" evidence="7">
    <location>
        <begin position="116"/>
        <end position="118"/>
    </location>
</feature>
<feature type="helix" evidence="8">
    <location>
        <begin position="119"/>
        <end position="131"/>
    </location>
</feature>
<feature type="strand" evidence="8">
    <location>
        <begin position="136"/>
        <end position="140"/>
    </location>
</feature>
<feature type="turn" evidence="8">
    <location>
        <begin position="142"/>
        <end position="144"/>
    </location>
</feature>
<feature type="helix" evidence="8">
    <location>
        <begin position="145"/>
        <end position="149"/>
    </location>
</feature>
<feature type="helix" evidence="8">
    <location>
        <begin position="154"/>
        <end position="160"/>
    </location>
</feature>
<feature type="strand" evidence="8">
    <location>
        <begin position="164"/>
        <end position="166"/>
    </location>
</feature>
<feature type="strand" evidence="8">
    <location>
        <begin position="170"/>
        <end position="174"/>
    </location>
</feature>
<feature type="strand" evidence="8">
    <location>
        <begin position="177"/>
        <end position="180"/>
    </location>
</feature>
<feature type="helix" evidence="8">
    <location>
        <begin position="189"/>
        <end position="191"/>
    </location>
</feature>
<feature type="strand" evidence="8">
    <location>
        <begin position="194"/>
        <end position="204"/>
    </location>
</feature>
<feature type="strand" evidence="8">
    <location>
        <begin position="209"/>
        <end position="211"/>
    </location>
</feature>
<feature type="strand" evidence="8">
    <location>
        <begin position="213"/>
        <end position="224"/>
    </location>
</feature>
<feature type="helix" evidence="8">
    <location>
        <begin position="225"/>
        <end position="240"/>
    </location>
</feature>
<feature type="helix" evidence="8">
    <location>
        <begin position="243"/>
        <end position="249"/>
    </location>
</feature>
<feature type="strand" evidence="8">
    <location>
        <begin position="253"/>
        <end position="256"/>
    </location>
</feature>
<feature type="turn" evidence="8">
    <location>
        <begin position="257"/>
        <end position="259"/>
    </location>
</feature>
<feature type="strand" evidence="8">
    <location>
        <begin position="260"/>
        <end position="266"/>
    </location>
</feature>
<feature type="helix" evidence="8">
    <location>
        <begin position="268"/>
        <end position="287"/>
    </location>
</feature>
<feature type="strand" evidence="8">
    <location>
        <begin position="290"/>
        <end position="292"/>
    </location>
</feature>
<feature type="strand" evidence="8">
    <location>
        <begin position="297"/>
        <end position="300"/>
    </location>
</feature>
<feature type="helix" evidence="8">
    <location>
        <begin position="302"/>
        <end position="307"/>
    </location>
</feature>
<feature type="helix" evidence="8">
    <location>
        <begin position="309"/>
        <end position="312"/>
    </location>
</feature>
<feature type="strand" evidence="8">
    <location>
        <begin position="321"/>
        <end position="323"/>
    </location>
</feature>
<feature type="turn" evidence="8">
    <location>
        <begin position="324"/>
        <end position="326"/>
    </location>
</feature>
<feature type="strand" evidence="8">
    <location>
        <begin position="327"/>
        <end position="331"/>
    </location>
</feature>
<feature type="strand" evidence="8">
    <location>
        <begin position="333"/>
        <end position="335"/>
    </location>
</feature>
<feature type="helix" evidence="8">
    <location>
        <begin position="336"/>
        <end position="344"/>
    </location>
</feature>
<feature type="helix" evidence="8">
    <location>
        <begin position="350"/>
        <end position="352"/>
    </location>
</feature>
<feature type="strand" evidence="8">
    <location>
        <begin position="355"/>
        <end position="364"/>
    </location>
</feature>
<feature type="turn" evidence="8">
    <location>
        <begin position="369"/>
        <end position="371"/>
    </location>
</feature>
<feature type="turn" evidence="8">
    <location>
        <begin position="374"/>
        <end position="376"/>
    </location>
</feature>
<feature type="strand" evidence="8">
    <location>
        <begin position="379"/>
        <end position="390"/>
    </location>
</feature>
<feature type="helix" evidence="8">
    <location>
        <begin position="392"/>
        <end position="394"/>
    </location>
</feature>
<feature type="helix" evidence="8">
    <location>
        <begin position="395"/>
        <end position="412"/>
    </location>
</feature>
<feature type="strand" evidence="8">
    <location>
        <begin position="418"/>
        <end position="424"/>
    </location>
</feature>
<feature type="strand" evidence="8">
    <location>
        <begin position="430"/>
        <end position="434"/>
    </location>
</feature>
<feature type="helix" evidence="8">
    <location>
        <begin position="437"/>
        <end position="454"/>
    </location>
</feature>
<feature type="strand" evidence="8">
    <location>
        <begin position="461"/>
        <end position="463"/>
    </location>
</feature>
<feature type="strand" evidence="8">
    <location>
        <begin position="471"/>
        <end position="476"/>
    </location>
</feature>
<feature type="strand" evidence="8">
    <location>
        <begin position="484"/>
        <end position="494"/>
    </location>
</feature>
<feature type="helix" evidence="8">
    <location>
        <begin position="495"/>
        <end position="498"/>
    </location>
</feature>
<feature type="strand" evidence="7">
    <location>
        <begin position="506"/>
        <end position="508"/>
    </location>
</feature>
<feature type="strand" evidence="8">
    <location>
        <begin position="514"/>
        <end position="523"/>
    </location>
</feature>
<feature type="helix" evidence="8">
    <location>
        <begin position="524"/>
        <end position="535"/>
    </location>
</feature>
<feature type="turn" evidence="8">
    <location>
        <begin position="541"/>
        <end position="543"/>
    </location>
</feature>
<feature type="strand" evidence="8">
    <location>
        <begin position="548"/>
        <end position="554"/>
    </location>
</feature>
<feature type="helix" evidence="8">
    <location>
        <begin position="555"/>
        <end position="570"/>
    </location>
</feature>
<feature type="turn" evidence="8">
    <location>
        <begin position="571"/>
        <end position="573"/>
    </location>
</feature>
<feature type="strand" evidence="8">
    <location>
        <begin position="576"/>
        <end position="578"/>
    </location>
</feature>
<feature type="helix" evidence="8">
    <location>
        <begin position="585"/>
        <end position="595"/>
    </location>
</feature>
<feature type="strand" evidence="8">
    <location>
        <begin position="598"/>
        <end position="603"/>
    </location>
</feature>
<feature type="helix" evidence="8">
    <location>
        <begin position="605"/>
        <end position="609"/>
    </location>
</feature>
<feature type="strand" evidence="8">
    <location>
        <begin position="612"/>
        <end position="617"/>
    </location>
</feature>
<feature type="strand" evidence="8">
    <location>
        <begin position="625"/>
        <end position="627"/>
    </location>
</feature>
<feature type="helix" evidence="8">
    <location>
        <begin position="628"/>
        <end position="640"/>
    </location>
</feature>
<protein>
    <recommendedName>
        <fullName evidence="1">Threonine--tRNA ligase</fullName>
        <ecNumber evidence="1">6.1.1.3</ecNumber>
    </recommendedName>
    <alternativeName>
        <fullName evidence="1">Threonyl-tRNA synthetase</fullName>
        <shortName evidence="1">ThrRS</shortName>
    </alternativeName>
</protein>
<sequence length="645" mass="74460">MEQINIQFPDGNKKAFDKGTTTEDIAQSISPGLRKKAVAGKFNGQLVDLTKPLETDGSIEIVTPGSEEALEVLRHSTAHLMAHAIKRLYGNVKFGVGPVIEGGFYYDFDIDQNISSDDFEQIEKTMKQIVNENMKIERKVVSRDEAKELFSNDEYKLELIDAIPEDENVTLYSQGDFTDLCRGVHVPSTAKIKEFKLLSTAGAYWRGDSNNKMLQRIYGTAFFDKKELKAHLQMLEERKERDHRKIGKELELFTNSQLVGAGLPLWLPNGATIRREIERYIVDKEVSMGYDHVYTPVLANVDLYKTSGHWDHYQEDMFPPMQLDETESMVLRPMNCPHHMMIYANKPHSYRELPIRIAELGTMHRYEASGAVSGLQRVRGMTLNDSHIFVRPDQIKEEFKRVVNMIIDVYKDFGFEDYSFRLSYRDPEDKEKYFDDDDMWNKAENMLKEAADELGLSYEEAIGEAAFYGPKLDVQVKTAMGKEETLSTAQLDFLLPERFDLTYIGQDGEHHRPVVIHRGVVSTMERFVAFLTEETKGAFPTWLAPKQVQIIPVNVDLHYDYARQLQDELKSQGVRVSIDDRNEKMGYKIREAQMQKIPYQIVVGDKEVENNQVNVRQYGSQDQETVEKDEFIWNLVDEIRLKKHR</sequence>
<gene>
    <name evidence="1" type="primary">thrS</name>
    <name type="ordered locus">MW1626</name>
</gene>
<accession>Q8NW68</accession>
<name>SYT_STAAW</name>
<evidence type="ECO:0000255" key="1">
    <source>
        <dbReference type="HAMAP-Rule" id="MF_00184"/>
    </source>
</evidence>
<evidence type="ECO:0000255" key="2">
    <source>
        <dbReference type="PROSITE-ProRule" id="PRU01228"/>
    </source>
</evidence>
<evidence type="ECO:0000269" key="3">
    <source>
    </source>
</evidence>
<evidence type="ECO:0000305" key="4">
    <source>
    </source>
</evidence>
<evidence type="ECO:0007744" key="5">
    <source>
        <dbReference type="PDB" id="1NYQ"/>
    </source>
</evidence>
<evidence type="ECO:0007744" key="6">
    <source>
        <dbReference type="PDB" id="1NYR"/>
    </source>
</evidence>
<evidence type="ECO:0007829" key="7">
    <source>
        <dbReference type="PDB" id="1NYQ"/>
    </source>
</evidence>
<evidence type="ECO:0007829" key="8">
    <source>
        <dbReference type="PDB" id="1NYR"/>
    </source>
</evidence>
<dbReference type="EC" id="6.1.1.3" evidence="1"/>
<dbReference type="EMBL" id="BA000033">
    <property type="protein sequence ID" value="BAB95491.1"/>
    <property type="molecule type" value="Genomic_DNA"/>
</dbReference>
<dbReference type="RefSeq" id="WP_000435132.1">
    <property type="nucleotide sequence ID" value="NC_003923.1"/>
</dbReference>
<dbReference type="PDB" id="1NYQ">
    <property type="method" value="X-ray"/>
    <property type="resolution" value="3.20 A"/>
    <property type="chains" value="A/B=1-645"/>
</dbReference>
<dbReference type="PDB" id="1NYR">
    <property type="method" value="X-ray"/>
    <property type="resolution" value="2.80 A"/>
    <property type="chains" value="A/B=1-645"/>
</dbReference>
<dbReference type="PDBsum" id="1NYQ"/>
<dbReference type="PDBsum" id="1NYR"/>
<dbReference type="SMR" id="Q8NW68"/>
<dbReference type="DrugBank" id="DB03355">
    <property type="generic name" value="5'-O-(L-Threonylsulfamoyl)adenosine"/>
</dbReference>
<dbReference type="KEGG" id="sam:MW1626"/>
<dbReference type="HOGENOM" id="CLU_008554_0_1_9"/>
<dbReference type="BRENDA" id="6.1.1.3">
    <property type="organism ID" value="3352"/>
</dbReference>
<dbReference type="EvolutionaryTrace" id="Q8NW68"/>
<dbReference type="GO" id="GO:0005737">
    <property type="term" value="C:cytoplasm"/>
    <property type="evidence" value="ECO:0007669"/>
    <property type="project" value="UniProtKB-SubCell"/>
</dbReference>
<dbReference type="GO" id="GO:0005524">
    <property type="term" value="F:ATP binding"/>
    <property type="evidence" value="ECO:0007669"/>
    <property type="project" value="UniProtKB-UniRule"/>
</dbReference>
<dbReference type="GO" id="GO:0140096">
    <property type="term" value="F:catalytic activity, acting on a protein"/>
    <property type="evidence" value="ECO:0007669"/>
    <property type="project" value="UniProtKB-ARBA"/>
</dbReference>
<dbReference type="GO" id="GO:0046872">
    <property type="term" value="F:metal ion binding"/>
    <property type="evidence" value="ECO:0007669"/>
    <property type="project" value="UniProtKB-KW"/>
</dbReference>
<dbReference type="GO" id="GO:0004829">
    <property type="term" value="F:threonine-tRNA ligase activity"/>
    <property type="evidence" value="ECO:0007669"/>
    <property type="project" value="UniProtKB-UniRule"/>
</dbReference>
<dbReference type="GO" id="GO:0016740">
    <property type="term" value="F:transferase activity"/>
    <property type="evidence" value="ECO:0007669"/>
    <property type="project" value="UniProtKB-ARBA"/>
</dbReference>
<dbReference type="GO" id="GO:0000049">
    <property type="term" value="F:tRNA binding"/>
    <property type="evidence" value="ECO:0007669"/>
    <property type="project" value="UniProtKB-KW"/>
</dbReference>
<dbReference type="GO" id="GO:0006435">
    <property type="term" value="P:threonyl-tRNA aminoacylation"/>
    <property type="evidence" value="ECO:0007669"/>
    <property type="project" value="UniProtKB-UniRule"/>
</dbReference>
<dbReference type="CDD" id="cd01667">
    <property type="entry name" value="TGS_ThrRS"/>
    <property type="match status" value="1"/>
</dbReference>
<dbReference type="CDD" id="cd00860">
    <property type="entry name" value="ThrRS_anticodon"/>
    <property type="match status" value="1"/>
</dbReference>
<dbReference type="CDD" id="cd00771">
    <property type="entry name" value="ThrRS_core"/>
    <property type="match status" value="1"/>
</dbReference>
<dbReference type="FunFam" id="3.10.20.30:FF:000005">
    <property type="entry name" value="Threonine--tRNA ligase"/>
    <property type="match status" value="1"/>
</dbReference>
<dbReference type="FunFam" id="3.30.54.20:FF:000002">
    <property type="entry name" value="Threonine--tRNA ligase"/>
    <property type="match status" value="1"/>
</dbReference>
<dbReference type="FunFam" id="3.30.930.10:FF:000002">
    <property type="entry name" value="Threonine--tRNA ligase"/>
    <property type="match status" value="1"/>
</dbReference>
<dbReference type="FunFam" id="3.40.50.800:FF:000001">
    <property type="entry name" value="Threonine--tRNA ligase"/>
    <property type="match status" value="1"/>
</dbReference>
<dbReference type="FunFam" id="3.30.980.10:FF:000005">
    <property type="entry name" value="Threonyl-tRNA synthetase, mitochondrial"/>
    <property type="match status" value="1"/>
</dbReference>
<dbReference type="Gene3D" id="3.10.20.30">
    <property type="match status" value="1"/>
</dbReference>
<dbReference type="Gene3D" id="3.30.54.20">
    <property type="match status" value="1"/>
</dbReference>
<dbReference type="Gene3D" id="3.40.50.800">
    <property type="entry name" value="Anticodon-binding domain"/>
    <property type="match status" value="1"/>
</dbReference>
<dbReference type="Gene3D" id="3.30.930.10">
    <property type="entry name" value="Bira Bifunctional Protein, Domain 2"/>
    <property type="match status" value="1"/>
</dbReference>
<dbReference type="Gene3D" id="3.30.980.10">
    <property type="entry name" value="Threonyl-trna Synthetase, Chain A, domain 2"/>
    <property type="match status" value="1"/>
</dbReference>
<dbReference type="HAMAP" id="MF_00184">
    <property type="entry name" value="Thr_tRNA_synth"/>
    <property type="match status" value="1"/>
</dbReference>
<dbReference type="InterPro" id="IPR002314">
    <property type="entry name" value="aa-tRNA-synt_IIb"/>
</dbReference>
<dbReference type="InterPro" id="IPR006195">
    <property type="entry name" value="aa-tRNA-synth_II"/>
</dbReference>
<dbReference type="InterPro" id="IPR045864">
    <property type="entry name" value="aa-tRNA-synth_II/BPL/LPL"/>
</dbReference>
<dbReference type="InterPro" id="IPR004154">
    <property type="entry name" value="Anticodon-bd"/>
</dbReference>
<dbReference type="InterPro" id="IPR036621">
    <property type="entry name" value="Anticodon-bd_dom_sf"/>
</dbReference>
<dbReference type="InterPro" id="IPR012675">
    <property type="entry name" value="Beta-grasp_dom_sf"/>
</dbReference>
<dbReference type="InterPro" id="IPR004095">
    <property type="entry name" value="TGS"/>
</dbReference>
<dbReference type="InterPro" id="IPR012676">
    <property type="entry name" value="TGS-like"/>
</dbReference>
<dbReference type="InterPro" id="IPR002320">
    <property type="entry name" value="Thr-tRNA-ligase_IIa"/>
</dbReference>
<dbReference type="InterPro" id="IPR018163">
    <property type="entry name" value="Thr/Ala-tRNA-synth_IIc_edit"/>
</dbReference>
<dbReference type="InterPro" id="IPR047246">
    <property type="entry name" value="ThrRS_anticodon"/>
</dbReference>
<dbReference type="InterPro" id="IPR033728">
    <property type="entry name" value="ThrRS_core"/>
</dbReference>
<dbReference type="InterPro" id="IPR012947">
    <property type="entry name" value="tRNA_SAD"/>
</dbReference>
<dbReference type="NCBIfam" id="TIGR00418">
    <property type="entry name" value="thrS"/>
    <property type="match status" value="1"/>
</dbReference>
<dbReference type="PANTHER" id="PTHR11451:SF56">
    <property type="entry name" value="THREONINE--TRNA LIGASE 1"/>
    <property type="match status" value="1"/>
</dbReference>
<dbReference type="PANTHER" id="PTHR11451">
    <property type="entry name" value="THREONINE-TRNA LIGASE"/>
    <property type="match status" value="1"/>
</dbReference>
<dbReference type="Pfam" id="PF03129">
    <property type="entry name" value="HGTP_anticodon"/>
    <property type="match status" value="1"/>
</dbReference>
<dbReference type="Pfam" id="PF02824">
    <property type="entry name" value="TGS"/>
    <property type="match status" value="1"/>
</dbReference>
<dbReference type="Pfam" id="PF00587">
    <property type="entry name" value="tRNA-synt_2b"/>
    <property type="match status" value="1"/>
</dbReference>
<dbReference type="Pfam" id="PF07973">
    <property type="entry name" value="tRNA_SAD"/>
    <property type="match status" value="1"/>
</dbReference>
<dbReference type="PRINTS" id="PR01047">
    <property type="entry name" value="TRNASYNTHTHR"/>
</dbReference>
<dbReference type="SMART" id="SM00863">
    <property type="entry name" value="tRNA_SAD"/>
    <property type="match status" value="1"/>
</dbReference>
<dbReference type="SUPFAM" id="SSF52954">
    <property type="entry name" value="Class II aaRS ABD-related"/>
    <property type="match status" value="1"/>
</dbReference>
<dbReference type="SUPFAM" id="SSF55681">
    <property type="entry name" value="Class II aaRS and biotin synthetases"/>
    <property type="match status" value="1"/>
</dbReference>
<dbReference type="SUPFAM" id="SSF81271">
    <property type="entry name" value="TGS-like"/>
    <property type="match status" value="1"/>
</dbReference>
<dbReference type="SUPFAM" id="SSF55186">
    <property type="entry name" value="ThrRS/AlaRS common domain"/>
    <property type="match status" value="1"/>
</dbReference>
<dbReference type="PROSITE" id="PS50862">
    <property type="entry name" value="AA_TRNA_LIGASE_II"/>
    <property type="match status" value="1"/>
</dbReference>
<dbReference type="PROSITE" id="PS51880">
    <property type="entry name" value="TGS"/>
    <property type="match status" value="1"/>
</dbReference>
<reference key="1">
    <citation type="journal article" date="2002" name="Lancet">
        <title>Genome and virulence determinants of high virulence community-acquired MRSA.</title>
        <authorList>
            <person name="Baba T."/>
            <person name="Takeuchi F."/>
            <person name="Kuroda M."/>
            <person name="Yuzawa H."/>
            <person name="Aoki K."/>
            <person name="Oguchi A."/>
            <person name="Nagai Y."/>
            <person name="Iwama N."/>
            <person name="Asano K."/>
            <person name="Naimi T."/>
            <person name="Kuroda H."/>
            <person name="Cui L."/>
            <person name="Yamamoto K."/>
            <person name="Hiramatsu K."/>
        </authorList>
    </citation>
    <scope>NUCLEOTIDE SEQUENCE [LARGE SCALE GENOMIC DNA]</scope>
    <source>
        <strain>MW2</strain>
    </source>
</reference>
<reference evidence="5 6" key="2">
    <citation type="journal article" date="2003" name="J. Mol. Biol.">
        <title>Conformational movements and cooperativity upon amino acid, ATP and tRNA binding in threonyl-tRNA synthetase.</title>
        <authorList>
            <person name="Torres-Larios A."/>
            <person name="Sankaranarayanan R."/>
            <person name="Rees B."/>
            <person name="Dock-Bregeon A.C."/>
            <person name="Moras D."/>
        </authorList>
    </citation>
    <scope>X-RAY CRYSTALLOGRAPHY (2.80 ANGSTROMS) IN COMPLEX WITH ATP; THREONYL ADENYLATE ANALOG AND ZINC</scope>
    <scope>SUBUNIT</scope>
    <scope>DOMAIN</scope>
</reference>
<comment type="function">
    <text evidence="1">Catalyzes the attachment of threonine to tRNA(Thr) in a two-step reaction: L-threonine is first activated by ATP to form Thr-AMP and then transferred to the acceptor end of tRNA(Thr). Also edits incorrectly charged L-seryl-tRNA(Thr).</text>
</comment>
<comment type="catalytic activity">
    <reaction evidence="1">
        <text>tRNA(Thr) + L-threonine + ATP = L-threonyl-tRNA(Thr) + AMP + diphosphate + H(+)</text>
        <dbReference type="Rhea" id="RHEA:24624"/>
        <dbReference type="Rhea" id="RHEA-COMP:9670"/>
        <dbReference type="Rhea" id="RHEA-COMP:9704"/>
        <dbReference type="ChEBI" id="CHEBI:15378"/>
        <dbReference type="ChEBI" id="CHEBI:30616"/>
        <dbReference type="ChEBI" id="CHEBI:33019"/>
        <dbReference type="ChEBI" id="CHEBI:57926"/>
        <dbReference type="ChEBI" id="CHEBI:78442"/>
        <dbReference type="ChEBI" id="CHEBI:78534"/>
        <dbReference type="ChEBI" id="CHEBI:456215"/>
        <dbReference type="EC" id="6.1.1.3"/>
    </reaction>
</comment>
<comment type="cofactor">
    <cofactor evidence="1 3">
        <name>Zn(2+)</name>
        <dbReference type="ChEBI" id="CHEBI:29105"/>
    </cofactor>
    <text evidence="1 3">Binds 1 zinc ion per subunit.</text>
</comment>
<comment type="subunit">
    <text evidence="1 3">Homodimer.</text>
</comment>
<comment type="subcellular location">
    <subcellularLocation>
        <location evidence="1">Cytoplasm</location>
    </subcellularLocation>
</comment>
<comment type="domain">
    <text evidence="4">The protein structure shows 2 N-terminal domains, the central catalytic and C-terminal anticodon recognition domain. Comparison with the E.coli structure shows the N-terminal domains (editing region) are quite flexible with respect to the catalytic domain. The C-terminal domain recognizes the anticodon region of the tRNA while the acceptor arm is sandwiched between the N-terminal domains and the catalytic domain (PubMed:12875846).</text>
</comment>
<comment type="similarity">
    <text evidence="1">Belongs to the class-II aminoacyl-tRNA synthetase family.</text>
</comment>
<organism>
    <name type="scientific">Staphylococcus aureus (strain MW2)</name>
    <dbReference type="NCBI Taxonomy" id="196620"/>
    <lineage>
        <taxon>Bacteria</taxon>
        <taxon>Bacillati</taxon>
        <taxon>Bacillota</taxon>
        <taxon>Bacilli</taxon>
        <taxon>Bacillales</taxon>
        <taxon>Staphylococcaceae</taxon>
        <taxon>Staphylococcus</taxon>
    </lineage>
</organism>
<keyword id="KW-0002">3D-structure</keyword>
<keyword id="KW-0030">Aminoacyl-tRNA synthetase</keyword>
<keyword id="KW-0067">ATP-binding</keyword>
<keyword id="KW-0963">Cytoplasm</keyword>
<keyword id="KW-0436">Ligase</keyword>
<keyword id="KW-0479">Metal-binding</keyword>
<keyword id="KW-0547">Nucleotide-binding</keyword>
<keyword id="KW-0648">Protein biosynthesis</keyword>
<keyword id="KW-0694">RNA-binding</keyword>
<keyword id="KW-0820">tRNA-binding</keyword>
<keyword id="KW-0862">Zinc</keyword>
<proteinExistence type="evidence at protein level"/>